<dbReference type="EMBL" id="CP001177">
    <property type="protein sequence ID" value="ACJ77236.1"/>
    <property type="molecule type" value="Genomic_DNA"/>
</dbReference>
<dbReference type="KEGG" id="bcr:BCAH187_A0290"/>
<dbReference type="HOGENOM" id="CLU_123820_0_0_9"/>
<dbReference type="Proteomes" id="UP000002214">
    <property type="component" value="Chromosome"/>
</dbReference>
<dbReference type="GO" id="GO:0005737">
    <property type="term" value="C:cytoplasm"/>
    <property type="evidence" value="ECO:0007669"/>
    <property type="project" value="UniProtKB-SubCell"/>
</dbReference>
<dbReference type="GO" id="GO:0008270">
    <property type="term" value="F:zinc ion binding"/>
    <property type="evidence" value="ECO:0007669"/>
    <property type="project" value="UniProtKB-UniRule"/>
</dbReference>
<dbReference type="GO" id="GO:0006950">
    <property type="term" value="P:response to stress"/>
    <property type="evidence" value="ECO:0007669"/>
    <property type="project" value="UniProtKB-ARBA"/>
</dbReference>
<dbReference type="HAMAP" id="MF_00745">
    <property type="entry name" value="SprT_like"/>
    <property type="match status" value="1"/>
</dbReference>
<dbReference type="InterPro" id="IPR006640">
    <property type="entry name" value="SprT-like_domain"/>
</dbReference>
<dbReference type="InterPro" id="IPR035240">
    <property type="entry name" value="SprT_Zn_ribbon"/>
</dbReference>
<dbReference type="InterPro" id="IPR023524">
    <property type="entry name" value="Uncharacterised_SprT-like"/>
</dbReference>
<dbReference type="NCBIfam" id="NF003339">
    <property type="entry name" value="PRK04351.1"/>
    <property type="match status" value="1"/>
</dbReference>
<dbReference type="Pfam" id="PF10263">
    <property type="entry name" value="SprT-like"/>
    <property type="match status" value="1"/>
</dbReference>
<dbReference type="Pfam" id="PF17283">
    <property type="entry name" value="Zn_ribbon_SprT"/>
    <property type="match status" value="1"/>
</dbReference>
<dbReference type="SMART" id="SM00731">
    <property type="entry name" value="SprT"/>
    <property type="match status" value="1"/>
</dbReference>
<comment type="cofactor">
    <cofactor evidence="1">
        <name>Zn(2+)</name>
        <dbReference type="ChEBI" id="CHEBI:29105"/>
    </cofactor>
    <text evidence="1">Binds 1 zinc ion.</text>
</comment>
<comment type="subcellular location">
    <subcellularLocation>
        <location evidence="1">Cytoplasm</location>
    </subcellularLocation>
</comment>
<comment type="similarity">
    <text evidence="1">Belongs to the SprT family.</text>
</comment>
<gene>
    <name type="ordered locus">BCAH187_A0290</name>
</gene>
<evidence type="ECO:0000255" key="1">
    <source>
        <dbReference type="HAMAP-Rule" id="MF_00745"/>
    </source>
</evidence>
<reference key="1">
    <citation type="submission" date="2008-10" db="EMBL/GenBank/DDBJ databases">
        <title>Genome sequence of Bacillus cereus AH187.</title>
        <authorList>
            <person name="Dodson R.J."/>
            <person name="Durkin A.S."/>
            <person name="Rosovitz M.J."/>
            <person name="Rasko D.A."/>
            <person name="Kolsto A.B."/>
            <person name="Okstad O.A."/>
            <person name="Ravel J."/>
            <person name="Sutton G."/>
        </authorList>
    </citation>
    <scope>NUCLEOTIDE SEQUENCE [LARGE SCALE GENOMIC DNA]</scope>
    <source>
        <strain>AH187</strain>
    </source>
</reference>
<protein>
    <recommendedName>
        <fullName evidence="1">Protein SprT-like</fullName>
    </recommendedName>
</protein>
<organism>
    <name type="scientific">Bacillus cereus (strain AH187)</name>
    <dbReference type="NCBI Taxonomy" id="405534"/>
    <lineage>
        <taxon>Bacteria</taxon>
        <taxon>Bacillati</taxon>
        <taxon>Bacillota</taxon>
        <taxon>Bacilli</taxon>
        <taxon>Bacillales</taxon>
        <taxon>Bacillaceae</taxon>
        <taxon>Bacillus</taxon>
        <taxon>Bacillus cereus group</taxon>
    </lineage>
</organism>
<sequence>MDEQEIQRLVEEVSLQYFGMPFLHKAMFNSRLRTTGGRYLLNTHNIELNYRYYEMYGKEELVGIVKHELCHYHLHIAGRGYKHRDKDFRELLKAVDAPRFCKRMINEEKGKKVYMYECMECSLQYVRRRQINTKRYVCGKCKGKLILIKKTS</sequence>
<proteinExistence type="inferred from homology"/>
<feature type="chain" id="PRO_1000133231" description="Protein SprT-like">
    <location>
        <begin position="1"/>
        <end position="152"/>
    </location>
</feature>
<feature type="domain" description="SprT-like" evidence="1">
    <location>
        <begin position="7"/>
        <end position="148"/>
    </location>
</feature>
<feature type="active site" evidence="1">
    <location>
        <position position="68"/>
    </location>
</feature>
<feature type="binding site" evidence="1">
    <location>
        <position position="67"/>
    </location>
    <ligand>
        <name>Zn(2+)</name>
        <dbReference type="ChEBI" id="CHEBI:29105"/>
    </ligand>
</feature>
<feature type="binding site" evidence="1">
    <location>
        <position position="71"/>
    </location>
    <ligand>
        <name>Zn(2+)</name>
        <dbReference type="ChEBI" id="CHEBI:29105"/>
    </ligand>
</feature>
<name>SPRTL_BACC7</name>
<accession>B7HRZ5</accession>
<keyword id="KW-0963">Cytoplasm</keyword>
<keyword id="KW-0479">Metal-binding</keyword>
<keyword id="KW-0862">Zinc</keyword>